<name>TIMP_ECOLI</name>
<sequence length="41" mass="4477">MKIRCFCIVLIVSGALLTEVNNNRSLSGDNLLVVNNLQSSK</sequence>
<organism>
    <name type="scientific">Escherichia coli (strain K12)</name>
    <dbReference type="NCBI Taxonomy" id="83333"/>
    <lineage>
        <taxon>Bacteria</taxon>
        <taxon>Pseudomonadati</taxon>
        <taxon>Pseudomonadota</taxon>
        <taxon>Gammaproteobacteria</taxon>
        <taxon>Enterobacterales</taxon>
        <taxon>Enterobacteriaceae</taxon>
        <taxon>Escherichia</taxon>
    </lineage>
</organism>
<keyword id="KW-0997">Cell inner membrane</keyword>
<keyword id="KW-1003">Cell membrane</keyword>
<keyword id="KW-0472">Membrane</keyword>
<keyword id="KW-1185">Reference proteome</keyword>
<keyword id="KW-1277">Toxin-antitoxin system</keyword>
<keyword id="KW-0812">Transmembrane</keyword>
<reference key="1">
    <citation type="journal article" date="1997" name="Science">
        <title>The complete genome sequence of Escherichia coli K-12.</title>
        <authorList>
            <person name="Blattner F.R."/>
            <person name="Plunkett G. III"/>
            <person name="Bloch C.A."/>
            <person name="Perna N.T."/>
            <person name="Burland V."/>
            <person name="Riley M."/>
            <person name="Collado-Vides J."/>
            <person name="Glasner J.D."/>
            <person name="Rode C.K."/>
            <person name="Mayhew G.F."/>
            <person name="Gregor J."/>
            <person name="Davis N.W."/>
            <person name="Kirkpatrick H.A."/>
            <person name="Goeden M.A."/>
            <person name="Rose D.J."/>
            <person name="Mau B."/>
            <person name="Shao Y."/>
        </authorList>
    </citation>
    <scope>NUCLEOTIDE SEQUENCE [LARGE SCALE GENOMIC DNA]</scope>
    <source>
        <strain>K12 / MG1655 / ATCC 47076</strain>
    </source>
</reference>
<feature type="chain" id="PRO_0000453138" description="Putative toxic protein TimP">
    <location>
        <begin position="1"/>
        <end position="41"/>
    </location>
</feature>
<feature type="transmembrane region" evidence="1">
    <location>
        <begin position="1"/>
        <end position="17"/>
    </location>
</feature>
<evidence type="ECO:0000250" key="1">
    <source>
        <dbReference type="UniProtKB" id="P0DUM2"/>
    </source>
</evidence>
<evidence type="ECO:0000305" key="2"/>
<evidence type="ECO:0000312" key="3">
    <source>
        <dbReference type="EMBL" id="UMR55116.1"/>
    </source>
</evidence>
<accession>P0DUM3</accession>
<accession>A0A9F2H0S5</accession>
<dbReference type="EMBL" id="U00096">
    <property type="protein sequence ID" value="UMR55116.1"/>
    <property type="molecule type" value="Genomic_DNA"/>
</dbReference>
<dbReference type="InParanoid" id="P0DUM3"/>
<dbReference type="Proteomes" id="UP000000625">
    <property type="component" value="Chromosome"/>
</dbReference>
<dbReference type="GO" id="GO:0005886">
    <property type="term" value="C:plasma membrane"/>
    <property type="evidence" value="ECO:0007669"/>
    <property type="project" value="UniProtKB-SubCell"/>
</dbReference>
<dbReference type="NCBIfam" id="NF040796">
    <property type="entry name" value="toxic_TimP"/>
    <property type="match status" value="1"/>
</dbReference>
<protein>
    <recommendedName>
        <fullName evidence="1">Putative toxic protein TimP</fullName>
    </recommendedName>
</protein>
<proteinExistence type="inferred from homology"/>
<comment type="function">
    <text evidence="1">Putative toxic component of a potential type I toxin-antitoxin (TA) system. Neutralized by sRNA antitoxin TimR which binds to the 5' UTR of timP mRNA and inhibits translation. The antitoxin gene is encoded immediately upstream and transcribed divergently from the toxin gene; antitoxin RNA is less stable than timP mRNA.</text>
</comment>
<comment type="subcellular location">
    <subcellularLocation>
        <location evidence="1">Cell inner membrane</location>
        <topology evidence="1">Single-pass membrane protein</topology>
    </subcellularLocation>
    <text evidence="1">The signal sequence is not cleaved and anchors the protein in the cell inner membrane.</text>
</comment>
<comment type="similarity">
    <text evidence="2">Belongs to the TimP toxin family.</text>
</comment>
<gene>
    <name evidence="3" type="primary">timP</name>
    <name evidence="3" type="synonym">ECK4669</name>
    <name type="synonym">ryfA</name>
    <name type="ordered locus">b4812</name>
</gene>